<proteinExistence type="inferred from homology"/>
<comment type="function">
    <text evidence="1">The beta subunit is responsible for the synthesis of L-tryptophan from indole and L-serine.</text>
</comment>
<comment type="catalytic activity">
    <reaction evidence="1">
        <text>(1S,2R)-1-C-(indol-3-yl)glycerol 3-phosphate + L-serine = D-glyceraldehyde 3-phosphate + L-tryptophan + H2O</text>
        <dbReference type="Rhea" id="RHEA:10532"/>
        <dbReference type="ChEBI" id="CHEBI:15377"/>
        <dbReference type="ChEBI" id="CHEBI:33384"/>
        <dbReference type="ChEBI" id="CHEBI:57912"/>
        <dbReference type="ChEBI" id="CHEBI:58866"/>
        <dbReference type="ChEBI" id="CHEBI:59776"/>
        <dbReference type="EC" id="4.2.1.20"/>
    </reaction>
</comment>
<comment type="cofactor">
    <cofactor evidence="1">
        <name>pyridoxal 5'-phosphate</name>
        <dbReference type="ChEBI" id="CHEBI:597326"/>
    </cofactor>
</comment>
<comment type="pathway">
    <text evidence="1">Amino-acid biosynthesis; L-tryptophan biosynthesis; L-tryptophan from chorismate: step 5/5.</text>
</comment>
<comment type="subunit">
    <text evidence="1">Tetramer of two alpha and two beta chains.</text>
</comment>
<comment type="similarity">
    <text evidence="1">Belongs to the TrpB family.</text>
</comment>
<accession>B7J4S9</accession>
<protein>
    <recommendedName>
        <fullName evidence="1">Tryptophan synthase beta chain</fullName>
        <ecNumber evidence="1">4.2.1.20</ecNumber>
    </recommendedName>
</protein>
<name>TRPB_ACIF2</name>
<keyword id="KW-0028">Amino-acid biosynthesis</keyword>
<keyword id="KW-0057">Aromatic amino acid biosynthesis</keyword>
<keyword id="KW-0456">Lyase</keyword>
<keyword id="KW-0663">Pyridoxal phosphate</keyword>
<keyword id="KW-1185">Reference proteome</keyword>
<keyword id="KW-0822">Tryptophan biosynthesis</keyword>
<reference key="1">
    <citation type="journal article" date="2008" name="BMC Genomics">
        <title>Acidithiobacillus ferrooxidans metabolism: from genome sequence to industrial applications.</title>
        <authorList>
            <person name="Valdes J."/>
            <person name="Pedroso I."/>
            <person name="Quatrini R."/>
            <person name="Dodson R.J."/>
            <person name="Tettelin H."/>
            <person name="Blake R. II"/>
            <person name="Eisen J.A."/>
            <person name="Holmes D.S."/>
        </authorList>
    </citation>
    <scope>NUCLEOTIDE SEQUENCE [LARGE SCALE GENOMIC DNA]</scope>
    <source>
        <strain>ATCC 23270 / DSM 14882 / CIP 104768 / NCIMB 8455</strain>
    </source>
</reference>
<gene>
    <name evidence="1" type="primary">trpB</name>
    <name type="ordered locus">AFE_2069</name>
</gene>
<organism>
    <name type="scientific">Acidithiobacillus ferrooxidans (strain ATCC 23270 / DSM 14882 / CIP 104768 / NCIMB 8455)</name>
    <name type="common">Ferrobacillus ferrooxidans (strain ATCC 23270)</name>
    <dbReference type="NCBI Taxonomy" id="243159"/>
    <lineage>
        <taxon>Bacteria</taxon>
        <taxon>Pseudomonadati</taxon>
        <taxon>Pseudomonadota</taxon>
        <taxon>Acidithiobacillia</taxon>
        <taxon>Acidithiobacillales</taxon>
        <taxon>Acidithiobacillaceae</taxon>
        <taxon>Acidithiobacillus</taxon>
    </lineage>
</organism>
<sequence length="399" mass="43287">MGTYALPDAFGHYGPYGGRFVAETLIPALEELERAYQEAQRDPEFRAELHSELRQFVGRPNPLYHAGRLSRELGGAQIYLKREDLNHTGAHKINNAVGQALLARRMGKKRVIAETGAGQHGVATATVATRYGMECLVYMGEEDIQRQSSNVFRMRLLGAQVTAVSSGTRTLKDALNEALRDWVTNVESTFYVIGTVAGPHPYPVMVRDFHRVIGDEARAQCLELTGRLPDCLIACVGGGSNAIGLFYPFIEDRAVRMIGVEAGGLGLGTGQHAAPLTTGRPGVLHGNRTYLMEDEDGQILPTHSISAGLDYPGVGPEHAYLKDTGRAEYVAATDEEALAAFHRLCRTEGIIPALESAHALAHAFRLAPTMRSDQTIIVNLSGRGDKDIHTVAALEGIHL</sequence>
<dbReference type="EC" id="4.2.1.20" evidence="1"/>
<dbReference type="EMBL" id="CP001219">
    <property type="protein sequence ID" value="ACK77930.1"/>
    <property type="molecule type" value="Genomic_DNA"/>
</dbReference>
<dbReference type="RefSeq" id="WP_012536947.1">
    <property type="nucleotide sequence ID" value="NC_011761.1"/>
</dbReference>
<dbReference type="SMR" id="B7J4S9"/>
<dbReference type="STRING" id="243159.AFE_2069"/>
<dbReference type="PaxDb" id="243159-AFE_2069"/>
<dbReference type="GeneID" id="65281205"/>
<dbReference type="KEGG" id="afr:AFE_2069"/>
<dbReference type="eggNOG" id="COG0133">
    <property type="taxonomic scope" value="Bacteria"/>
</dbReference>
<dbReference type="HOGENOM" id="CLU_016734_3_1_6"/>
<dbReference type="UniPathway" id="UPA00035">
    <property type="reaction ID" value="UER00044"/>
</dbReference>
<dbReference type="Proteomes" id="UP000001362">
    <property type="component" value="Chromosome"/>
</dbReference>
<dbReference type="GO" id="GO:0005737">
    <property type="term" value="C:cytoplasm"/>
    <property type="evidence" value="ECO:0007669"/>
    <property type="project" value="TreeGrafter"/>
</dbReference>
<dbReference type="GO" id="GO:0004834">
    <property type="term" value="F:tryptophan synthase activity"/>
    <property type="evidence" value="ECO:0007669"/>
    <property type="project" value="UniProtKB-UniRule"/>
</dbReference>
<dbReference type="CDD" id="cd06446">
    <property type="entry name" value="Trp-synth_B"/>
    <property type="match status" value="1"/>
</dbReference>
<dbReference type="FunFam" id="3.40.50.1100:FF:000001">
    <property type="entry name" value="Tryptophan synthase beta chain"/>
    <property type="match status" value="1"/>
</dbReference>
<dbReference type="FunFam" id="3.40.50.1100:FF:000004">
    <property type="entry name" value="Tryptophan synthase beta chain"/>
    <property type="match status" value="1"/>
</dbReference>
<dbReference type="Gene3D" id="3.40.50.1100">
    <property type="match status" value="2"/>
</dbReference>
<dbReference type="HAMAP" id="MF_00133">
    <property type="entry name" value="Trp_synth_beta"/>
    <property type="match status" value="1"/>
</dbReference>
<dbReference type="InterPro" id="IPR006653">
    <property type="entry name" value="Trp_synth_b_CS"/>
</dbReference>
<dbReference type="InterPro" id="IPR006654">
    <property type="entry name" value="Trp_synth_beta"/>
</dbReference>
<dbReference type="InterPro" id="IPR023026">
    <property type="entry name" value="Trp_synth_beta/beta-like"/>
</dbReference>
<dbReference type="InterPro" id="IPR001926">
    <property type="entry name" value="TrpB-like_PALP"/>
</dbReference>
<dbReference type="InterPro" id="IPR036052">
    <property type="entry name" value="TrpB-like_PALP_sf"/>
</dbReference>
<dbReference type="NCBIfam" id="TIGR00263">
    <property type="entry name" value="trpB"/>
    <property type="match status" value="1"/>
</dbReference>
<dbReference type="PANTHER" id="PTHR48077:SF3">
    <property type="entry name" value="TRYPTOPHAN SYNTHASE"/>
    <property type="match status" value="1"/>
</dbReference>
<dbReference type="PANTHER" id="PTHR48077">
    <property type="entry name" value="TRYPTOPHAN SYNTHASE-RELATED"/>
    <property type="match status" value="1"/>
</dbReference>
<dbReference type="Pfam" id="PF00291">
    <property type="entry name" value="PALP"/>
    <property type="match status" value="1"/>
</dbReference>
<dbReference type="PIRSF" id="PIRSF001413">
    <property type="entry name" value="Trp_syn_beta"/>
    <property type="match status" value="1"/>
</dbReference>
<dbReference type="SUPFAM" id="SSF53686">
    <property type="entry name" value="Tryptophan synthase beta subunit-like PLP-dependent enzymes"/>
    <property type="match status" value="1"/>
</dbReference>
<dbReference type="PROSITE" id="PS00168">
    <property type="entry name" value="TRP_SYNTHASE_BETA"/>
    <property type="match status" value="1"/>
</dbReference>
<evidence type="ECO:0000255" key="1">
    <source>
        <dbReference type="HAMAP-Rule" id="MF_00133"/>
    </source>
</evidence>
<feature type="chain" id="PRO_1000117745" description="Tryptophan synthase beta chain">
    <location>
        <begin position="1"/>
        <end position="399"/>
    </location>
</feature>
<feature type="modified residue" description="N6-(pyridoxal phosphate)lysine" evidence="1">
    <location>
        <position position="92"/>
    </location>
</feature>